<comment type="function">
    <text evidence="5">Bifunctional mRNA-capping enzyme exhibiting RNA 5'-triphosphate monophosphatase activity in the N-terminal part and mRNA guanylyltransferase activity in the C-terminal part. Catalyzes the first two steps of cap formation: by removing the gamma-phosphate from the 5'-triphosphate end of nascent mRNA to yield a diphosphate end, and by transferring the GMP moiety of GTP to the 5'-diphosphate terminus via a covalent enzyme-GMP reaction intermediate.</text>
</comment>
<comment type="catalytic activity">
    <reaction evidence="5">
        <text>a 5'-end triphospho-ribonucleoside in mRNA + H2O = a 5'-end diphospho-ribonucleoside in mRNA + phosphate + H(+)</text>
        <dbReference type="Rhea" id="RHEA:67004"/>
        <dbReference type="Rhea" id="RHEA-COMP:17164"/>
        <dbReference type="Rhea" id="RHEA-COMP:17165"/>
        <dbReference type="ChEBI" id="CHEBI:15377"/>
        <dbReference type="ChEBI" id="CHEBI:15378"/>
        <dbReference type="ChEBI" id="CHEBI:43474"/>
        <dbReference type="ChEBI" id="CHEBI:167616"/>
        <dbReference type="ChEBI" id="CHEBI:167618"/>
        <dbReference type="EC" id="3.6.1.74"/>
    </reaction>
    <physiologicalReaction direction="left-to-right" evidence="7">
        <dbReference type="Rhea" id="RHEA:67005"/>
    </physiologicalReaction>
</comment>
<comment type="catalytic activity">
    <reaction evidence="5">
        <text>a 5'-end diphospho-ribonucleoside in mRNA + GTP + H(+) = a 5'-end (5'-triphosphoguanosine)-ribonucleoside in mRNA + diphosphate</text>
        <dbReference type="Rhea" id="RHEA:67012"/>
        <dbReference type="Rhea" id="RHEA-COMP:17165"/>
        <dbReference type="Rhea" id="RHEA-COMP:17166"/>
        <dbReference type="ChEBI" id="CHEBI:15378"/>
        <dbReference type="ChEBI" id="CHEBI:33019"/>
        <dbReference type="ChEBI" id="CHEBI:37565"/>
        <dbReference type="ChEBI" id="CHEBI:167616"/>
        <dbReference type="ChEBI" id="CHEBI:167617"/>
        <dbReference type="EC" id="2.7.7.50"/>
    </reaction>
    <physiologicalReaction direction="left-to-right" evidence="7">
        <dbReference type="Rhea" id="RHEA:67013"/>
    </physiologicalReaction>
</comment>
<comment type="activity regulation">
    <text evidence="5">RNA triphosphatase activity is inhibited by magnesium.</text>
</comment>
<comment type="subcellular location">
    <subcellularLocation>
        <location evidence="1">Nucleus</location>
    </subcellularLocation>
</comment>
<comment type="similarity">
    <text evidence="6">In the N-terminal section; belongs to the non-receptor class of the protein-tyrosine phosphatase family.</text>
</comment>
<comment type="similarity">
    <text evidence="6">In the C-terminal section; belongs to the eukaryotic GTase family.</text>
</comment>
<accession>Q17607</accession>
<accession>O02558</accession>
<name>MCE1_CAEEL</name>
<dbReference type="EC" id="3.6.1.74" evidence="5"/>
<dbReference type="EC" id="2.7.7.50" evidence="5"/>
<dbReference type="EMBL" id="Z75525">
    <property type="protein sequence ID" value="CAA99765.2"/>
    <property type="molecule type" value="Genomic_DNA"/>
</dbReference>
<dbReference type="EMBL" id="AF003925">
    <property type="protein sequence ID" value="AAB61344.1"/>
    <property type="molecule type" value="mRNA"/>
</dbReference>
<dbReference type="PIR" id="T18885">
    <property type="entry name" value="T18885"/>
</dbReference>
<dbReference type="RefSeq" id="NP_001020979.1">
    <property type="nucleotide sequence ID" value="NM_001025808.6"/>
</dbReference>
<dbReference type="RefSeq" id="NP_001020980.1">
    <property type="nucleotide sequence ID" value="NM_001025809.1"/>
</dbReference>
<dbReference type="SMR" id="Q17607"/>
<dbReference type="BioGRID" id="38238">
    <property type="interactions" value="4"/>
</dbReference>
<dbReference type="FunCoup" id="Q17607">
    <property type="interactions" value="3453"/>
</dbReference>
<dbReference type="STRING" id="6239.C03D6.3a.1"/>
<dbReference type="PaxDb" id="6239-C03D6.3a"/>
<dbReference type="PeptideAtlas" id="Q17607"/>
<dbReference type="EnsemblMetazoa" id="C03D6.3a.1">
    <property type="protein sequence ID" value="C03D6.3a.1"/>
    <property type="gene ID" value="WBGene00000466"/>
</dbReference>
<dbReference type="GeneID" id="172814"/>
<dbReference type="KEGG" id="cel:CELE_C03D6.3"/>
<dbReference type="UCSC" id="C03D6.3a">
    <property type="organism name" value="c. elegans"/>
</dbReference>
<dbReference type="AGR" id="WB:WBGene00000466"/>
<dbReference type="CTD" id="172814"/>
<dbReference type="WormBase" id="C03D6.3a">
    <property type="protein sequence ID" value="CE32300"/>
    <property type="gene ID" value="WBGene00000466"/>
    <property type="gene designation" value="cel-1"/>
</dbReference>
<dbReference type="eggNOG" id="KOG2386">
    <property type="taxonomic scope" value="Eukaryota"/>
</dbReference>
<dbReference type="InParanoid" id="Q17607"/>
<dbReference type="OMA" id="LGPPDRW"/>
<dbReference type="OrthoDB" id="200924at2759"/>
<dbReference type="PhylomeDB" id="Q17607"/>
<dbReference type="Reactome" id="R-CEL-72086">
    <property type="pathway name" value="mRNA Capping"/>
</dbReference>
<dbReference type="Reactome" id="R-CEL-77075">
    <property type="pathway name" value="RNA Pol II CTD phosphorylation and interaction with CE"/>
</dbReference>
<dbReference type="PRO" id="PR:Q17607"/>
<dbReference type="Proteomes" id="UP000001940">
    <property type="component" value="Chromosome I"/>
</dbReference>
<dbReference type="Bgee" id="WBGene00000466">
    <property type="expression patterns" value="Expressed in embryo and 4 other cell types or tissues"/>
</dbReference>
<dbReference type="ExpressionAtlas" id="Q17607">
    <property type="expression patterns" value="baseline and differential"/>
</dbReference>
<dbReference type="GO" id="GO:0005634">
    <property type="term" value="C:nucleus"/>
    <property type="evidence" value="ECO:0000314"/>
    <property type="project" value="WormBase"/>
</dbReference>
<dbReference type="GO" id="GO:0005524">
    <property type="term" value="F:ATP binding"/>
    <property type="evidence" value="ECO:0007669"/>
    <property type="project" value="InterPro"/>
</dbReference>
<dbReference type="GO" id="GO:0005525">
    <property type="term" value="F:GTP binding"/>
    <property type="evidence" value="ECO:0007669"/>
    <property type="project" value="UniProtKB-KW"/>
</dbReference>
<dbReference type="GO" id="GO:0140818">
    <property type="term" value="F:mRNA 5'-triphosphate monophosphatase activity"/>
    <property type="evidence" value="ECO:0007669"/>
    <property type="project" value="InterPro"/>
</dbReference>
<dbReference type="GO" id="GO:0004484">
    <property type="term" value="F:mRNA guanylyltransferase activity"/>
    <property type="evidence" value="ECO:0000318"/>
    <property type="project" value="GO_Central"/>
</dbReference>
<dbReference type="GO" id="GO:0004721">
    <property type="term" value="F:phosphoprotein phosphatase activity"/>
    <property type="evidence" value="ECO:0007669"/>
    <property type="project" value="UniProtKB-KW"/>
</dbReference>
<dbReference type="GO" id="GO:0004651">
    <property type="term" value="F:polynucleotide 5'-phosphatase activity"/>
    <property type="evidence" value="ECO:0000314"/>
    <property type="project" value="WormBase"/>
</dbReference>
<dbReference type="GO" id="GO:0006370">
    <property type="term" value="P:7-methylguanosine mRNA capping"/>
    <property type="evidence" value="ECO:0000318"/>
    <property type="project" value="GO_Central"/>
</dbReference>
<dbReference type="GO" id="GO:0016311">
    <property type="term" value="P:dephosphorylation"/>
    <property type="evidence" value="ECO:0000314"/>
    <property type="project" value="WormBase"/>
</dbReference>
<dbReference type="GO" id="GO:0098507">
    <property type="term" value="P:polynucleotide 5' dephosphorylation"/>
    <property type="evidence" value="ECO:0000314"/>
    <property type="project" value="WormBase"/>
</dbReference>
<dbReference type="GO" id="GO:0010628">
    <property type="term" value="P:positive regulation of gene expression"/>
    <property type="evidence" value="ECO:0000316"/>
    <property type="project" value="UniProtKB"/>
</dbReference>
<dbReference type="CDD" id="cd07895">
    <property type="entry name" value="Adenylation_mRNA_capping"/>
    <property type="match status" value="1"/>
</dbReference>
<dbReference type="CDD" id="cd17664">
    <property type="entry name" value="Mce1_N"/>
    <property type="match status" value="1"/>
</dbReference>
<dbReference type="FunFam" id="2.40.50.140:FF:000291">
    <property type="entry name" value="mRNA-capping enzyme"/>
    <property type="match status" value="1"/>
</dbReference>
<dbReference type="FunFam" id="3.30.470.30:FF:000047">
    <property type="entry name" value="mRNA-capping enzyme"/>
    <property type="match status" value="1"/>
</dbReference>
<dbReference type="Gene3D" id="3.30.470.30">
    <property type="entry name" value="DNA ligase/mRNA capping enzyme"/>
    <property type="match status" value="1"/>
</dbReference>
<dbReference type="Gene3D" id="2.40.50.140">
    <property type="entry name" value="Nucleic acid-binding proteins"/>
    <property type="match status" value="1"/>
</dbReference>
<dbReference type="Gene3D" id="3.90.190.10">
    <property type="entry name" value="Protein tyrosine phosphatase superfamily"/>
    <property type="match status" value="1"/>
</dbReference>
<dbReference type="InterPro" id="IPR000340">
    <property type="entry name" value="Dual-sp_phosphatase_cat-dom"/>
</dbReference>
<dbReference type="InterPro" id="IPR017074">
    <property type="entry name" value="mRNA_cap_enz_bifunc"/>
</dbReference>
<dbReference type="InterPro" id="IPR001339">
    <property type="entry name" value="mRNA_cap_enzyme_adenylation"/>
</dbReference>
<dbReference type="InterPro" id="IPR013846">
    <property type="entry name" value="mRNA_cap_enzyme_C"/>
</dbReference>
<dbReference type="InterPro" id="IPR051029">
    <property type="entry name" value="mRNA_Capping_Enz/RNA_Phosphat"/>
</dbReference>
<dbReference type="InterPro" id="IPR012340">
    <property type="entry name" value="NA-bd_OB-fold"/>
</dbReference>
<dbReference type="InterPro" id="IPR029021">
    <property type="entry name" value="Prot-tyrosine_phosphatase-like"/>
</dbReference>
<dbReference type="InterPro" id="IPR016130">
    <property type="entry name" value="Tyr_Pase_AS"/>
</dbReference>
<dbReference type="InterPro" id="IPR000387">
    <property type="entry name" value="Tyr_Pase_dom"/>
</dbReference>
<dbReference type="InterPro" id="IPR020422">
    <property type="entry name" value="TYR_PHOSPHATASE_DUAL_dom"/>
</dbReference>
<dbReference type="PANTHER" id="PTHR10367">
    <property type="entry name" value="MRNA-CAPPING ENZYME"/>
    <property type="match status" value="1"/>
</dbReference>
<dbReference type="PANTHER" id="PTHR10367:SF17">
    <property type="entry name" value="MRNA-CAPPING ENZYME"/>
    <property type="match status" value="1"/>
</dbReference>
<dbReference type="Pfam" id="PF00782">
    <property type="entry name" value="DSPc"/>
    <property type="match status" value="1"/>
</dbReference>
<dbReference type="Pfam" id="PF03919">
    <property type="entry name" value="mRNA_cap_C"/>
    <property type="match status" value="1"/>
</dbReference>
<dbReference type="Pfam" id="PF01331">
    <property type="entry name" value="mRNA_cap_enzyme"/>
    <property type="match status" value="1"/>
</dbReference>
<dbReference type="PIRSF" id="PIRSF036958">
    <property type="entry name" value="mRNA_capping_HCE"/>
    <property type="match status" value="1"/>
</dbReference>
<dbReference type="SUPFAM" id="SSF52799">
    <property type="entry name" value="(Phosphotyrosine protein) phosphatases II"/>
    <property type="match status" value="1"/>
</dbReference>
<dbReference type="SUPFAM" id="SSF56091">
    <property type="entry name" value="DNA ligase/mRNA capping enzyme, catalytic domain"/>
    <property type="match status" value="1"/>
</dbReference>
<dbReference type="SUPFAM" id="SSF50249">
    <property type="entry name" value="Nucleic acid-binding proteins"/>
    <property type="match status" value="1"/>
</dbReference>
<dbReference type="PROSITE" id="PS00383">
    <property type="entry name" value="TYR_PHOSPHATASE_1"/>
    <property type="match status" value="1"/>
</dbReference>
<dbReference type="PROSITE" id="PS50056">
    <property type="entry name" value="TYR_PHOSPHATASE_2"/>
    <property type="match status" value="1"/>
</dbReference>
<dbReference type="PROSITE" id="PS50054">
    <property type="entry name" value="TYR_PHOSPHATASE_DUAL"/>
    <property type="match status" value="1"/>
</dbReference>
<keyword id="KW-0342">GTP-binding</keyword>
<keyword id="KW-0378">Hydrolase</keyword>
<keyword id="KW-0506">mRNA capping</keyword>
<keyword id="KW-0507">mRNA processing</keyword>
<keyword id="KW-0511">Multifunctional enzyme</keyword>
<keyword id="KW-0547">Nucleotide-binding</keyword>
<keyword id="KW-0548">Nucleotidyltransferase</keyword>
<keyword id="KW-0539">Nucleus</keyword>
<keyword id="KW-0904">Protein phosphatase</keyword>
<keyword id="KW-1185">Reference proteome</keyword>
<keyword id="KW-0808">Transferase</keyword>
<sequence>MATRGPTPDKARMGLPDRWLHCPKTGTLINNLFFPFKTPLCKMYDNQIAERRYQFHPAEVFSHPHLHGKKIGLWIDLTNTDRYYFREEVTEHECIYHKMKMAGRGVSPTQEDTDNFIKLVQEFHKKYPDRVVGVHCTHGFNRTGFLIAAYLFQVEEYGLDAAIGEFAENRQKGIYKQDYIDDLFARYDPTEDDKILAPEKPDWEREMSIGMSTQIDNGRPSTSQQIPATNGNNNQNGNQLSGGGDNSKLFMDGLIRGVKVCEDEGKKSMLQAKIKNLCKYNKQGFPGLQPVSLSRGNINLLEQESYMVSWKADGMRYIIYINDGDVYAFDRDNEVFEIENLDFVTKNGAPLMETLVDTEVIIDKVEINGAMCDQPRMLIYDIMRFNSVNVMKEPFYKRFEIIKTEIIDMRTAAFKTGRLKHENQIMSVRRKDFYDLEATAKLFGPKFVQHVGHEIDGLIFQPKKTKYETGRCDKVLKWKPPSHNSVDFLLKVEKKCKEGMLPEWIGYLFVQNLSDPFGTMKATATLKKYHNKIIECTLLVDNQGRPKEWKFMRERTDKSLPNGLRTAENVVETMVNPVTETYLIEYVNHALRVLKRAAAAHRHHQIHQQQLHEGEPEARRQKL</sequence>
<evidence type="ECO:0000250" key="1"/>
<evidence type="ECO:0000255" key="2"/>
<evidence type="ECO:0000255" key="3">
    <source>
        <dbReference type="PROSITE-ProRule" id="PRU00160"/>
    </source>
</evidence>
<evidence type="ECO:0000256" key="4">
    <source>
        <dbReference type="SAM" id="MobiDB-lite"/>
    </source>
</evidence>
<evidence type="ECO:0000269" key="5">
    <source>
    </source>
</evidence>
<evidence type="ECO:0000305" key="6"/>
<evidence type="ECO:0000305" key="7">
    <source>
    </source>
</evidence>
<reference key="1">
    <citation type="journal article" date="1998" name="Science">
        <title>Genome sequence of the nematode C. elegans: a platform for investigating biology.</title>
        <authorList>
            <consortium name="The C. elegans sequencing consortium"/>
        </authorList>
    </citation>
    <scope>NUCLEOTIDE SEQUENCE [LARGE SCALE GENOMIC DNA]</scope>
    <source>
        <strain>Bristol N2</strain>
    </source>
</reference>
<reference key="2">
    <citation type="submission" date="1997-06" db="EMBL/GenBank/DDBJ databases">
        <title>Identification of mRNA capping enzyme from C.elegans.</title>
        <authorList>
            <person name="Shuman S."/>
            <person name="Ho C.K."/>
        </authorList>
    </citation>
    <scope>NUCLEOTIDE SEQUENCE [MRNA] OF 13-585</scope>
    <source>
        <strain>Bristol N2</strain>
    </source>
</reference>
<reference key="3">
    <citation type="journal article" date="1997" name="Cell">
        <title>An RNA 5'-triphosphatase related to the protein tyrosine phosphatases.</title>
        <authorList>
            <person name="Takagi T."/>
            <person name="Moore C.R."/>
            <person name="Diehn F."/>
            <person name="Buratowski S."/>
        </authorList>
    </citation>
    <scope>ACTIVE SITE</scope>
    <scope>MUTAGENESIS OF CYS-136</scope>
    <scope>FUNCTION</scope>
    <scope>ACTIVITY REGULATION</scope>
    <scope>CATALYTIC ACTIVITY</scope>
</reference>
<protein>
    <recommendedName>
        <fullName>mRNA-capping enzyme</fullName>
    </recommendedName>
    <domain>
        <recommendedName>
            <fullName>mRNA 5'-triphosphate monophosphatase</fullName>
            <ecNumber evidence="5">3.6.1.74</ecNumber>
        </recommendedName>
        <alternativeName>
            <fullName>mRNA 5'-phosphatase</fullName>
        </alternativeName>
    </domain>
    <domain>
        <recommendedName>
            <fullName>mRNA guanylyltransferase</fullName>
            <ecNumber evidence="5">2.7.7.50</ecNumber>
        </recommendedName>
        <alternativeName>
            <fullName>GTP--RNA guanylyltransferase</fullName>
            <shortName>GTase</shortName>
        </alternativeName>
    </domain>
</protein>
<proteinExistence type="evidence at protein level"/>
<gene>
    <name type="primary">cel-1</name>
    <name type="ORF">C03D6.3</name>
</gene>
<feature type="chain" id="PRO_0000210110" description="mRNA-capping enzyme">
    <location>
        <begin position="1"/>
        <end position="623"/>
    </location>
</feature>
<feature type="domain" description="Tyrosine-protein phosphatase" evidence="3">
    <location>
        <begin position="44"/>
        <end position="196"/>
    </location>
</feature>
<feature type="region of interest" description="TPase">
    <location>
        <begin position="13"/>
        <end position="224"/>
    </location>
</feature>
<feature type="region of interest" description="Disordered" evidence="4">
    <location>
        <begin position="213"/>
        <end position="243"/>
    </location>
</feature>
<feature type="region of interest" description="GTase">
    <location>
        <begin position="241"/>
        <end position="585"/>
    </location>
</feature>
<feature type="region of interest" description="Disordered" evidence="4">
    <location>
        <begin position="603"/>
        <end position="623"/>
    </location>
</feature>
<feature type="compositionally biased region" description="Polar residues" evidence="4">
    <location>
        <begin position="213"/>
        <end position="229"/>
    </location>
</feature>
<feature type="compositionally biased region" description="Low complexity" evidence="4">
    <location>
        <begin position="230"/>
        <end position="239"/>
    </location>
</feature>
<feature type="compositionally biased region" description="Basic and acidic residues" evidence="4">
    <location>
        <begin position="610"/>
        <end position="623"/>
    </location>
</feature>
<feature type="active site" description="Phosphocysteine intermediate" evidence="3 5">
    <location>
        <position position="136"/>
    </location>
</feature>
<feature type="active site" description="N6-GMP-lysine intermediate" evidence="1">
    <location>
        <position position="311"/>
    </location>
</feature>
<feature type="binding site" evidence="1">
    <location>
        <position position="316"/>
    </location>
    <ligand>
        <name>GTP</name>
        <dbReference type="ChEBI" id="CHEBI:37565"/>
    </ligand>
</feature>
<feature type="binding site" evidence="2">
    <location>
        <position position="331"/>
    </location>
    <ligand>
        <name>GTP</name>
        <dbReference type="ChEBI" id="CHEBI:37565"/>
    </ligand>
</feature>
<feature type="binding site" evidence="2">
    <location>
        <begin position="357"/>
        <end position="359"/>
    </location>
    <ligand>
        <name>GTP</name>
        <dbReference type="ChEBI" id="CHEBI:37565"/>
    </ligand>
</feature>
<feature type="binding site" evidence="2">
    <location>
        <begin position="477"/>
        <end position="479"/>
    </location>
    <ligand>
        <name>GTP</name>
        <dbReference type="ChEBI" id="CHEBI:37565"/>
    </ligand>
</feature>
<feature type="binding site" evidence="2">
    <location>
        <begin position="553"/>
        <end position="558"/>
    </location>
    <ligand>
        <name>GTP</name>
        <dbReference type="ChEBI" id="CHEBI:37565"/>
    </ligand>
</feature>
<feature type="mutagenesis site" description="Loss of activity." evidence="5">
    <original>C</original>
    <variation>A</variation>
    <variation>S</variation>
    <location>
        <position position="136"/>
    </location>
</feature>
<organism>
    <name type="scientific">Caenorhabditis elegans</name>
    <dbReference type="NCBI Taxonomy" id="6239"/>
    <lineage>
        <taxon>Eukaryota</taxon>
        <taxon>Metazoa</taxon>
        <taxon>Ecdysozoa</taxon>
        <taxon>Nematoda</taxon>
        <taxon>Chromadorea</taxon>
        <taxon>Rhabditida</taxon>
        <taxon>Rhabditina</taxon>
        <taxon>Rhabditomorpha</taxon>
        <taxon>Rhabditoidea</taxon>
        <taxon>Rhabditidae</taxon>
        <taxon>Peloderinae</taxon>
        <taxon>Caenorhabditis</taxon>
    </lineage>
</organism>